<gene>
    <name evidence="6" type="ORF">CBG16825</name>
</gene>
<proteinExistence type="inferred from homology"/>
<organism>
    <name type="scientific">Caenorhabditis briggsae</name>
    <dbReference type="NCBI Taxonomy" id="6238"/>
    <lineage>
        <taxon>Eukaryota</taxon>
        <taxon>Metazoa</taxon>
        <taxon>Ecdysozoa</taxon>
        <taxon>Nematoda</taxon>
        <taxon>Chromadorea</taxon>
        <taxon>Rhabditida</taxon>
        <taxon>Rhabditina</taxon>
        <taxon>Rhabditomorpha</taxon>
        <taxon>Rhabditoidea</taxon>
        <taxon>Rhabditidae</taxon>
        <taxon>Peloderinae</taxon>
        <taxon>Caenorhabditis</taxon>
    </lineage>
</organism>
<reference key="1">
    <citation type="journal article" date="2003" name="PLoS Biol.">
        <title>The genome sequence of Caenorhabditis briggsae: a platform for comparative genomics.</title>
        <authorList>
            <person name="Stein L.D."/>
            <person name="Bao Z."/>
            <person name="Blasiar D."/>
            <person name="Blumenthal T."/>
            <person name="Brent M.R."/>
            <person name="Chen N."/>
            <person name="Chinwalla A."/>
            <person name="Clarke L."/>
            <person name="Clee C."/>
            <person name="Coghlan A."/>
            <person name="Coulson A."/>
            <person name="D'Eustachio P."/>
            <person name="Fitch D.H.A."/>
            <person name="Fulton L.A."/>
            <person name="Fulton R.E."/>
            <person name="Griffiths-Jones S."/>
            <person name="Harris T.W."/>
            <person name="Hillier L.W."/>
            <person name="Kamath R."/>
            <person name="Kuwabara P.E."/>
            <person name="Mardis E.R."/>
            <person name="Marra M.A."/>
            <person name="Miner T.L."/>
            <person name="Minx P."/>
            <person name="Mullikin J.C."/>
            <person name="Plumb R.W."/>
            <person name="Rogers J."/>
            <person name="Schein J.E."/>
            <person name="Sohrmann M."/>
            <person name="Spieth J."/>
            <person name="Stajich J.E."/>
            <person name="Wei C."/>
            <person name="Willey D."/>
            <person name="Wilson R.K."/>
            <person name="Durbin R.M."/>
            <person name="Waterston R.H."/>
        </authorList>
    </citation>
    <scope>NUCLEOTIDE SEQUENCE [LARGE SCALE GENOMIC DNA]</scope>
    <source>
        <strain>AF16</strain>
    </source>
</reference>
<dbReference type="EMBL" id="HE600944">
    <property type="protein sequence ID" value="CAP34689.1"/>
    <property type="molecule type" value="Genomic_DNA"/>
</dbReference>
<dbReference type="SMR" id="C0HLB6"/>
<dbReference type="FunCoup" id="C0HLB6">
    <property type="interactions" value="2063"/>
</dbReference>
<dbReference type="STRING" id="6238.C0HLB6"/>
<dbReference type="EnsemblMetazoa" id="CBG10000.1">
    <property type="protein sequence ID" value="CBG10000.1"/>
    <property type="gene ID" value="WBGene00031488"/>
</dbReference>
<dbReference type="EnsemblMetazoa" id="CBG16825.1">
    <property type="protein sequence ID" value="CBG16825.1"/>
    <property type="gene ID" value="WBGene00036658"/>
</dbReference>
<dbReference type="KEGG" id="cbr:CBG_10000"/>
<dbReference type="KEGG" id="cbr:CBG_16825"/>
<dbReference type="CTD" id="8583664"/>
<dbReference type="CTD" id="8587129"/>
<dbReference type="WormBase" id="CBG16825">
    <property type="protein sequence ID" value="CBP10352"/>
    <property type="gene ID" value="WBGene00036658"/>
</dbReference>
<dbReference type="InParanoid" id="C0HLB6"/>
<dbReference type="OMA" id="MGVMKPD"/>
<dbReference type="OrthoDB" id="1744869at2759"/>
<dbReference type="Proteomes" id="UP000008549">
    <property type="component" value="Unassembled WGS sequence"/>
</dbReference>
<dbReference type="GO" id="GO:0016020">
    <property type="term" value="C:membrane"/>
    <property type="evidence" value="ECO:0000318"/>
    <property type="project" value="GO_Central"/>
</dbReference>
<dbReference type="GO" id="GO:0033179">
    <property type="term" value="C:proton-transporting V-type ATPase, V0 domain"/>
    <property type="evidence" value="ECO:0007669"/>
    <property type="project" value="InterPro"/>
</dbReference>
<dbReference type="GO" id="GO:0046961">
    <property type="term" value="F:proton-transporting ATPase activity, rotational mechanism"/>
    <property type="evidence" value="ECO:0007669"/>
    <property type="project" value="InterPro"/>
</dbReference>
<dbReference type="GO" id="GO:0007042">
    <property type="term" value="P:lysosomal lumen acidification"/>
    <property type="evidence" value="ECO:0007669"/>
    <property type="project" value="EnsemblMetazoa"/>
</dbReference>
<dbReference type="GO" id="GO:0070266">
    <property type="term" value="P:necroptotic process"/>
    <property type="evidence" value="ECO:0007669"/>
    <property type="project" value="EnsemblMetazoa"/>
</dbReference>
<dbReference type="CDD" id="cd18175">
    <property type="entry name" value="ATP-synt_Vo_c_ATP6C_rpt1"/>
    <property type="match status" value="1"/>
</dbReference>
<dbReference type="CDD" id="cd18176">
    <property type="entry name" value="ATP-synt_Vo_c_ATP6C_rpt2"/>
    <property type="match status" value="1"/>
</dbReference>
<dbReference type="FunFam" id="1.20.120.610:FF:000001">
    <property type="entry name" value="V-type proton ATPase proteolipid subunit"/>
    <property type="match status" value="1"/>
</dbReference>
<dbReference type="Gene3D" id="1.20.120.610">
    <property type="entry name" value="lithium bound rotor ring of v- atpase"/>
    <property type="match status" value="1"/>
</dbReference>
<dbReference type="InterPro" id="IPR002379">
    <property type="entry name" value="ATPase_proteolipid_c-like_dom"/>
</dbReference>
<dbReference type="InterPro" id="IPR000245">
    <property type="entry name" value="ATPase_proteolipid_csu"/>
</dbReference>
<dbReference type="InterPro" id="IPR011555">
    <property type="entry name" value="ATPase_proteolipid_su_C_euk"/>
</dbReference>
<dbReference type="InterPro" id="IPR035921">
    <property type="entry name" value="F/V-ATP_Csub_sf"/>
</dbReference>
<dbReference type="NCBIfam" id="TIGR01100">
    <property type="entry name" value="V_ATP_synt_C"/>
    <property type="match status" value="1"/>
</dbReference>
<dbReference type="PANTHER" id="PTHR10263">
    <property type="entry name" value="V-TYPE PROTON ATPASE PROTEOLIPID SUBUNIT"/>
    <property type="match status" value="1"/>
</dbReference>
<dbReference type="Pfam" id="PF00137">
    <property type="entry name" value="ATP-synt_C"/>
    <property type="match status" value="2"/>
</dbReference>
<dbReference type="PRINTS" id="PR00122">
    <property type="entry name" value="VACATPASE"/>
</dbReference>
<dbReference type="SUPFAM" id="SSF81333">
    <property type="entry name" value="F1F0 ATP synthase subunit C"/>
    <property type="match status" value="2"/>
</dbReference>
<name>VATL3_CAEBR</name>
<keyword id="KW-0375">Hydrogen ion transport</keyword>
<keyword id="KW-0406">Ion transport</keyword>
<keyword id="KW-0472">Membrane</keyword>
<keyword id="KW-1210">Necrosis</keyword>
<keyword id="KW-1185">Reference proteome</keyword>
<keyword id="KW-0812">Transmembrane</keyword>
<keyword id="KW-1133">Transmembrane helix</keyword>
<keyword id="KW-0813">Transport</keyword>
<evidence type="ECO:0000250" key="1">
    <source>
        <dbReference type="UniProtKB" id="C0HLB3"/>
    </source>
</evidence>
<evidence type="ECO:0000250" key="2">
    <source>
        <dbReference type="UniProtKB" id="P23956"/>
    </source>
</evidence>
<evidence type="ECO:0000250" key="3">
    <source>
        <dbReference type="UniProtKB" id="P63081"/>
    </source>
</evidence>
<evidence type="ECO:0000255" key="4"/>
<evidence type="ECO:0000305" key="5"/>
<evidence type="ECO:0000312" key="6">
    <source>
        <dbReference type="WormBase" id="CBG16825"/>
    </source>
</evidence>
<sequence length="161" mass="16402">MSYDLETAEHAAYAPFFGYMGAASAQIFTVLGAAYGTAKSAVGICSMGVMRPELIMKSVIPVIMAGIIGIYGLVVAMVLKGKVQAASAGYDLNKGFAHLAAGLTCGLCGLGAGYAIGIVGDAGVRGTAQQPRLFVGMILILIFSEVLGLYGMIVALILGTS</sequence>
<feature type="chain" id="PRO_0000445075" description="V-type proton ATPase 16 kDa proteolipid subunit c 3">
    <location>
        <begin position="1"/>
        <end position="161"/>
    </location>
</feature>
<feature type="topological domain" description="Lumenal" evidence="4">
    <location>
        <begin position="1"/>
        <end position="15"/>
    </location>
</feature>
<feature type="transmembrane region" description="Helical" evidence="4">
    <location>
        <begin position="16"/>
        <end position="36"/>
    </location>
</feature>
<feature type="topological domain" description="Cytoplasmic" evidence="4">
    <location>
        <begin position="37"/>
        <end position="58"/>
    </location>
</feature>
<feature type="transmembrane region" description="Helical" evidence="4">
    <location>
        <begin position="59"/>
        <end position="79"/>
    </location>
</feature>
<feature type="topological domain" description="Lumenal" evidence="4">
    <location>
        <begin position="80"/>
        <end position="98"/>
    </location>
</feature>
<feature type="transmembrane region" description="Helical" evidence="4">
    <location>
        <begin position="99"/>
        <end position="119"/>
    </location>
</feature>
<feature type="topological domain" description="Cytoplasmic" evidence="4">
    <location>
        <begin position="120"/>
        <end position="137"/>
    </location>
</feature>
<feature type="transmembrane region" description="Helical" evidence="4">
    <location>
        <begin position="138"/>
        <end position="158"/>
    </location>
</feature>
<feature type="topological domain" description="Lumenal" evidence="4">
    <location>
        <begin position="159"/>
        <end position="161"/>
    </location>
</feature>
<feature type="site" description="Essential for proton translocation" evidence="3">
    <location>
        <position position="145"/>
    </location>
</feature>
<comment type="function">
    <text evidence="1 2">Proton-conducting pore forming subunit of the V0 complex of vacuolar(H+)-ATPase (V-ATPase), a multisubunit enzyme composed of a peripheral complex (V1) that hydrolyzes ATP and a membrane integral complex (V0) that translocates protons. V-ATPase is responsible for acidifying and maintaining the pH of intracellular compartments and in some cell types, is targeted to the plasma membrane, where it is responsible for acidifying the extracellular environment (By similarity). Involved in necrotic cell death. Required along with other vacuolar ATPase components for the removal of protein aggregates which form in immature oocytes in the distal gonad. This removal occurs as the oocytes mature and move to the proximal gonad, is triggered by the introduction of sperm through mating and occurs before fertilization. The introduction of sperm triggers V-ATPase accumulation in proximal oocytes and induces lysosomal acidification which leads to engulfing of protein aggregates by lysosomes and subsequent clearance of the aggregates. Lysosomal acidification also leads to changes in mitochondrial morphology and function. Mitochondria in distal immature oocytes are fragmented, produce high levels of reactive oxygen species (ROS) and have high membrane potential, indicative of metabolic inactivity. In contrast, mitochondria in proximal mature oocytes are tubular with lower ROS levels and membrane potential, indicative of an active metabolic state required for aggregate mobilization before clearance (By similarity).</text>
</comment>
<comment type="subunit">
    <text evidence="2">V-ATPase is a heteromultimeric enzyme made up of two complexes: the ATP-hydrolytic V1 complex and the proton translocation V0 complex (By similarity). The V1 complex consists of three catalytic AB heterodimers that form a heterohexamer, three peripheral stalks each consisting of EG heterodimers, one central rotor including subunits D and F, and the regulatory subunits C and H (By similarity). The proton translocation complex V0 consists of the proton transport subunit a, a ring of proteolipid subunits c9c'', rotary subunit d, subunits e and f, and the accessory subunits vah-19/Ac45 and vah-20/PRR (By similarity).</text>
</comment>
<comment type="subcellular location">
    <subcellularLocation>
        <location evidence="4">Membrane</location>
        <topology evidence="4">Multi-pass membrane protein</topology>
    </subcellularLocation>
</comment>
<comment type="miscellaneous">
    <text evidence="5">Vha-11 and vha-3 are transcribed on a dicistronic transcript where vha-3 is the upstream transcript and vha-11 the downstream.</text>
</comment>
<comment type="similarity">
    <text evidence="4">Belongs to the V-ATPase proteolipid subunit family.</text>
</comment>
<accession>C0HLB6</accession>
<accession>A8XA51</accession>
<accession>Q612A5</accession>
<protein>
    <recommendedName>
        <fullName evidence="5">V-type proton ATPase 16 kDa proteolipid subunit c 3</fullName>
        <shortName evidence="5">V-ATPase 16 kDa proteolipid subunit c 3</shortName>
    </recommendedName>
    <alternativeName>
        <fullName evidence="5">Vacuolar proton pump 16 kDa proteolipid subunit c 3</fullName>
    </alternativeName>
</protein>